<gene>
    <name evidence="1" type="primary">psaI</name>
</gene>
<protein>
    <recommendedName>
        <fullName evidence="1">Photosystem I reaction center subunit VIII</fullName>
        <shortName evidence="1">PSI-I</shortName>
    </recommendedName>
</protein>
<accession>Q6ENG4</accession>
<organism>
    <name type="scientific">Oryza nivara</name>
    <name type="common">Indian wild rice</name>
    <name type="synonym">Oryza sativa f. spontanea</name>
    <dbReference type="NCBI Taxonomy" id="4536"/>
    <lineage>
        <taxon>Eukaryota</taxon>
        <taxon>Viridiplantae</taxon>
        <taxon>Streptophyta</taxon>
        <taxon>Embryophyta</taxon>
        <taxon>Tracheophyta</taxon>
        <taxon>Spermatophyta</taxon>
        <taxon>Magnoliopsida</taxon>
        <taxon>Liliopsida</taxon>
        <taxon>Poales</taxon>
        <taxon>Poaceae</taxon>
        <taxon>BOP clade</taxon>
        <taxon>Oryzoideae</taxon>
        <taxon>Oryzeae</taxon>
        <taxon>Oryzinae</taxon>
        <taxon>Oryza</taxon>
    </lineage>
</organism>
<keyword id="KW-0150">Chloroplast</keyword>
<keyword id="KW-0472">Membrane</keyword>
<keyword id="KW-0602">Photosynthesis</keyword>
<keyword id="KW-0603">Photosystem I</keyword>
<keyword id="KW-0934">Plastid</keyword>
<keyword id="KW-1185">Reference proteome</keyword>
<keyword id="KW-0793">Thylakoid</keyword>
<keyword id="KW-0812">Transmembrane</keyword>
<keyword id="KW-1133">Transmembrane helix</keyword>
<name>PSAI_ORYNI</name>
<sequence length="36" mass="4028">MMDFNLPSIFVPLVGLVFPAIAMASLFLYVQKNKIV</sequence>
<geneLocation type="chloroplast"/>
<feature type="chain" id="PRO_0000194665" description="Photosystem I reaction center subunit VIII">
    <location>
        <begin position="1"/>
        <end position="36"/>
    </location>
</feature>
<feature type="transmembrane region" description="Helical" evidence="1">
    <location>
        <begin position="10"/>
        <end position="29"/>
    </location>
</feature>
<proteinExistence type="inferred from homology"/>
<dbReference type="EMBL" id="AP006728">
    <property type="protein sequence ID" value="BAD26788.1"/>
    <property type="molecule type" value="Genomic_DNA"/>
</dbReference>
<dbReference type="RefSeq" id="YP_052759.1">
    <property type="nucleotide sequence ID" value="NC_005973.1"/>
</dbReference>
<dbReference type="SMR" id="Q6ENG4"/>
<dbReference type="STRING" id="4536.Q6ENG4"/>
<dbReference type="GeneID" id="2885956"/>
<dbReference type="Proteomes" id="UP000006591">
    <property type="component" value="Chloroplast"/>
</dbReference>
<dbReference type="GO" id="GO:0009535">
    <property type="term" value="C:chloroplast thylakoid membrane"/>
    <property type="evidence" value="ECO:0007669"/>
    <property type="project" value="UniProtKB-SubCell"/>
</dbReference>
<dbReference type="GO" id="GO:0009522">
    <property type="term" value="C:photosystem I"/>
    <property type="evidence" value="ECO:0007669"/>
    <property type="project" value="UniProtKB-KW"/>
</dbReference>
<dbReference type="GO" id="GO:0009536">
    <property type="term" value="C:plastid"/>
    <property type="evidence" value="ECO:0000305"/>
    <property type="project" value="Gramene"/>
</dbReference>
<dbReference type="GO" id="GO:0015979">
    <property type="term" value="P:photosynthesis"/>
    <property type="evidence" value="ECO:0007669"/>
    <property type="project" value="UniProtKB-UniRule"/>
</dbReference>
<dbReference type="HAMAP" id="MF_00431">
    <property type="entry name" value="PSI_PsaI"/>
    <property type="match status" value="1"/>
</dbReference>
<dbReference type="InterPro" id="IPR001302">
    <property type="entry name" value="PSI_PsaI"/>
</dbReference>
<dbReference type="InterPro" id="IPR036357">
    <property type="entry name" value="PSI_PsaI_sf"/>
</dbReference>
<dbReference type="NCBIfam" id="TIGR03052">
    <property type="entry name" value="PS_I_psaI"/>
    <property type="match status" value="1"/>
</dbReference>
<dbReference type="PANTHER" id="PTHR35775">
    <property type="match status" value="1"/>
</dbReference>
<dbReference type="PANTHER" id="PTHR35775:SF2">
    <property type="entry name" value="PHOTOSYSTEM I REACTION CENTER SUBUNIT VIII"/>
    <property type="match status" value="1"/>
</dbReference>
<dbReference type="Pfam" id="PF00796">
    <property type="entry name" value="PSI_8"/>
    <property type="match status" value="1"/>
</dbReference>
<dbReference type="SUPFAM" id="SSF81540">
    <property type="entry name" value="Subunit VIII of photosystem I reaction centre, PsaI"/>
    <property type="match status" value="1"/>
</dbReference>
<evidence type="ECO:0000255" key="1">
    <source>
        <dbReference type="HAMAP-Rule" id="MF_00431"/>
    </source>
</evidence>
<evidence type="ECO:0000312" key="2">
    <source>
        <dbReference type="Proteomes" id="UP000006591"/>
    </source>
</evidence>
<comment type="function">
    <text evidence="1">May help in the organization of the PsaL subunit.</text>
</comment>
<comment type="subcellular location">
    <subcellularLocation>
        <location evidence="1">Plastid</location>
        <location evidence="1">Chloroplast thylakoid membrane</location>
        <topology evidence="1">Single-pass membrane protein</topology>
    </subcellularLocation>
</comment>
<comment type="similarity">
    <text evidence="1">Belongs to the PsaI family.</text>
</comment>
<reference key="1">
    <citation type="journal article" date="2004" name="Gene">
        <title>The complete nucleotide sequence of wild rice (Oryza nivara) chloroplast genome: first genome wide comparative sequence analysis of wild and cultivated rice.</title>
        <authorList>
            <person name="Masood M.S."/>
            <person name="Nishikawa T."/>
            <person name="Fukuoka S."/>
            <person name="Njenga P.K."/>
            <person name="Tsudzuki T."/>
            <person name="Kadowaki K."/>
        </authorList>
    </citation>
    <scope>NUCLEOTIDE SEQUENCE [LARGE SCALE GENOMIC DNA]</scope>
    <source>
        <strain evidence="2">cv. SL10</strain>
    </source>
</reference>